<dbReference type="EMBL" id="CP001172">
    <property type="protein sequence ID" value="ACJ58235.1"/>
    <property type="molecule type" value="Genomic_DNA"/>
</dbReference>
<dbReference type="RefSeq" id="WP_000959396.1">
    <property type="nucleotide sequence ID" value="NZ_CP001172.1"/>
</dbReference>
<dbReference type="SMR" id="B7GX68"/>
<dbReference type="HOGENOM" id="CLU_115353_1_1_6"/>
<dbReference type="Proteomes" id="UP000006924">
    <property type="component" value="Chromosome"/>
</dbReference>
<dbReference type="GO" id="GO:0003676">
    <property type="term" value="F:nucleic acid binding"/>
    <property type="evidence" value="ECO:0007669"/>
    <property type="project" value="InterPro"/>
</dbReference>
<dbReference type="CDD" id="cd20736">
    <property type="entry name" value="PoNe_Nuclease"/>
    <property type="match status" value="1"/>
</dbReference>
<dbReference type="Gene3D" id="3.40.1350.10">
    <property type="match status" value="1"/>
</dbReference>
<dbReference type="HAMAP" id="MF_00048">
    <property type="entry name" value="UPF0102"/>
    <property type="match status" value="1"/>
</dbReference>
<dbReference type="InterPro" id="IPR011335">
    <property type="entry name" value="Restrct_endonuc-II-like"/>
</dbReference>
<dbReference type="InterPro" id="IPR011856">
    <property type="entry name" value="tRNA_endonuc-like_dom_sf"/>
</dbReference>
<dbReference type="InterPro" id="IPR003509">
    <property type="entry name" value="UPF0102_YraN-like"/>
</dbReference>
<dbReference type="NCBIfam" id="NF009150">
    <property type="entry name" value="PRK12497.1-3"/>
    <property type="match status" value="1"/>
</dbReference>
<dbReference type="NCBIfam" id="NF011267">
    <property type="entry name" value="PRK14674.1"/>
    <property type="match status" value="1"/>
</dbReference>
<dbReference type="NCBIfam" id="TIGR00252">
    <property type="entry name" value="YraN family protein"/>
    <property type="match status" value="1"/>
</dbReference>
<dbReference type="PANTHER" id="PTHR34039">
    <property type="entry name" value="UPF0102 PROTEIN YRAN"/>
    <property type="match status" value="1"/>
</dbReference>
<dbReference type="PANTHER" id="PTHR34039:SF1">
    <property type="entry name" value="UPF0102 PROTEIN YRAN"/>
    <property type="match status" value="1"/>
</dbReference>
<dbReference type="Pfam" id="PF02021">
    <property type="entry name" value="UPF0102"/>
    <property type="match status" value="1"/>
</dbReference>
<dbReference type="SUPFAM" id="SSF52980">
    <property type="entry name" value="Restriction endonuclease-like"/>
    <property type="match status" value="1"/>
</dbReference>
<organism>
    <name type="scientific">Acinetobacter baumannii (strain AB307-0294)</name>
    <dbReference type="NCBI Taxonomy" id="557600"/>
    <lineage>
        <taxon>Bacteria</taxon>
        <taxon>Pseudomonadati</taxon>
        <taxon>Pseudomonadota</taxon>
        <taxon>Gammaproteobacteria</taxon>
        <taxon>Moraxellales</taxon>
        <taxon>Moraxellaceae</taxon>
        <taxon>Acinetobacter</taxon>
        <taxon>Acinetobacter calcoaceticus/baumannii complex</taxon>
    </lineage>
</organism>
<proteinExistence type="inferred from homology"/>
<comment type="similarity">
    <text evidence="1">Belongs to the UPF0102 family.</text>
</comment>
<evidence type="ECO:0000255" key="1">
    <source>
        <dbReference type="HAMAP-Rule" id="MF_00048"/>
    </source>
</evidence>
<name>Y2499_ACIB3</name>
<accession>B7GX68</accession>
<feature type="chain" id="PRO_1000200123" description="UPF0102 protein ABBFA_002499">
    <location>
        <begin position="1"/>
        <end position="133"/>
    </location>
</feature>
<reference key="1">
    <citation type="journal article" date="2008" name="J. Bacteriol.">
        <title>Comparative genome sequence analysis of multidrug-resistant Acinetobacter baumannii.</title>
        <authorList>
            <person name="Adams M.D."/>
            <person name="Goglin K."/>
            <person name="Molyneaux N."/>
            <person name="Hujer K.M."/>
            <person name="Lavender H."/>
            <person name="Jamison J.J."/>
            <person name="MacDonald I.J."/>
            <person name="Martin K.M."/>
            <person name="Russo T."/>
            <person name="Campagnari A.A."/>
            <person name="Hujer A.M."/>
            <person name="Bonomo R.A."/>
            <person name="Gill S.R."/>
        </authorList>
    </citation>
    <scope>NUCLEOTIDE SEQUENCE [LARGE SCALE GENOMIC DNA]</scope>
    <source>
        <strain>AB307-0294</strain>
    </source>
</reference>
<gene>
    <name type="ordered locus">ABBFA_002499</name>
</gene>
<sequence length="133" mass="15773">MLVAQQLGQWAEQTALKLLKEQNYEWVASNYHSRRGEVDLIVKRGNELIFVEVKARGQGNYGQACEMVTLSKQKKIIKTAMRFLQRYPSYQDFYCRFDVICFDFPQKIAKTVQQDFSKFHYDLQWIENAFTLD</sequence>
<protein>
    <recommendedName>
        <fullName evidence="1">UPF0102 protein ABBFA_002499</fullName>
    </recommendedName>
</protein>